<feature type="chain" id="PRO_0000141874" description="3-isopropylmalate dehydratase small subunit">
    <location>
        <begin position="1"/>
        <end position="201"/>
    </location>
</feature>
<sequence>MAEKFTQHTGLVVPLDAANVDTDAIIPKQFLQKVTRTGFGAHLFNDWRFLDEKGQQPNPEFVLNFPEYQGASILLARENFGCGSSREHAPWALTDYGFKVVIAPSFADIFYGNSFNNQLLPVKLSDEQVDELFTLVKANPGIKFEVDLEAQVVKAGDKTYSFKIDDFRRHCMLNGLDSIGLTLQHEDAIAEYENKQPAFMR</sequence>
<keyword id="KW-0028">Amino-acid biosynthesis</keyword>
<keyword id="KW-0100">Branched-chain amino acid biosynthesis</keyword>
<keyword id="KW-0432">Leucine biosynthesis</keyword>
<keyword id="KW-0456">Lyase</keyword>
<gene>
    <name evidence="1" type="primary">leuD</name>
    <name type="ordered locus">STY0129</name>
    <name type="ordered locus">t0114</name>
</gene>
<proteinExistence type="inferred from homology"/>
<accession>Q8Z9I3</accession>
<name>LEUD_SALTI</name>
<protein>
    <recommendedName>
        <fullName evidence="1">3-isopropylmalate dehydratase small subunit</fullName>
        <ecNumber evidence="1">4.2.1.33</ecNumber>
    </recommendedName>
    <alternativeName>
        <fullName evidence="1">Alpha-IPM isomerase</fullName>
        <shortName evidence="1">IPMI</shortName>
    </alternativeName>
    <alternativeName>
        <fullName evidence="1">Isopropylmalate isomerase</fullName>
    </alternativeName>
</protein>
<organism>
    <name type="scientific">Salmonella typhi</name>
    <dbReference type="NCBI Taxonomy" id="90370"/>
    <lineage>
        <taxon>Bacteria</taxon>
        <taxon>Pseudomonadati</taxon>
        <taxon>Pseudomonadota</taxon>
        <taxon>Gammaproteobacteria</taxon>
        <taxon>Enterobacterales</taxon>
        <taxon>Enterobacteriaceae</taxon>
        <taxon>Salmonella</taxon>
    </lineage>
</organism>
<reference key="1">
    <citation type="journal article" date="2001" name="Nature">
        <title>Complete genome sequence of a multiple drug resistant Salmonella enterica serovar Typhi CT18.</title>
        <authorList>
            <person name="Parkhill J."/>
            <person name="Dougan G."/>
            <person name="James K.D."/>
            <person name="Thomson N.R."/>
            <person name="Pickard D."/>
            <person name="Wain J."/>
            <person name="Churcher C.M."/>
            <person name="Mungall K.L."/>
            <person name="Bentley S.D."/>
            <person name="Holden M.T.G."/>
            <person name="Sebaihia M."/>
            <person name="Baker S."/>
            <person name="Basham D."/>
            <person name="Brooks K."/>
            <person name="Chillingworth T."/>
            <person name="Connerton P."/>
            <person name="Cronin A."/>
            <person name="Davis P."/>
            <person name="Davies R.M."/>
            <person name="Dowd L."/>
            <person name="White N."/>
            <person name="Farrar J."/>
            <person name="Feltwell T."/>
            <person name="Hamlin N."/>
            <person name="Haque A."/>
            <person name="Hien T.T."/>
            <person name="Holroyd S."/>
            <person name="Jagels K."/>
            <person name="Krogh A."/>
            <person name="Larsen T.S."/>
            <person name="Leather S."/>
            <person name="Moule S."/>
            <person name="O'Gaora P."/>
            <person name="Parry C."/>
            <person name="Quail M.A."/>
            <person name="Rutherford K.M."/>
            <person name="Simmonds M."/>
            <person name="Skelton J."/>
            <person name="Stevens K."/>
            <person name="Whitehead S."/>
            <person name="Barrell B.G."/>
        </authorList>
    </citation>
    <scope>NUCLEOTIDE SEQUENCE [LARGE SCALE GENOMIC DNA]</scope>
    <source>
        <strain>CT18</strain>
    </source>
</reference>
<reference key="2">
    <citation type="journal article" date="2003" name="J. Bacteriol.">
        <title>Comparative genomics of Salmonella enterica serovar Typhi strains Ty2 and CT18.</title>
        <authorList>
            <person name="Deng W."/>
            <person name="Liou S.-R."/>
            <person name="Plunkett G. III"/>
            <person name="Mayhew G.F."/>
            <person name="Rose D.J."/>
            <person name="Burland V."/>
            <person name="Kodoyianni V."/>
            <person name="Schwartz D.C."/>
            <person name="Blattner F.R."/>
        </authorList>
    </citation>
    <scope>NUCLEOTIDE SEQUENCE [LARGE SCALE GENOMIC DNA]</scope>
    <source>
        <strain>ATCC 700931 / Ty2</strain>
    </source>
</reference>
<comment type="function">
    <text evidence="1">Catalyzes the isomerization between 2-isopropylmalate and 3-isopropylmalate, via the formation of 2-isopropylmaleate.</text>
</comment>
<comment type="catalytic activity">
    <reaction evidence="1">
        <text>(2R,3S)-3-isopropylmalate = (2S)-2-isopropylmalate</text>
        <dbReference type="Rhea" id="RHEA:32287"/>
        <dbReference type="ChEBI" id="CHEBI:1178"/>
        <dbReference type="ChEBI" id="CHEBI:35121"/>
        <dbReference type="EC" id="4.2.1.33"/>
    </reaction>
</comment>
<comment type="pathway">
    <text evidence="1">Amino-acid biosynthesis; L-leucine biosynthesis; L-leucine from 3-methyl-2-oxobutanoate: step 2/4.</text>
</comment>
<comment type="subunit">
    <text evidence="1">Heterodimer of LeuC and LeuD.</text>
</comment>
<comment type="similarity">
    <text evidence="1">Belongs to the LeuD family. LeuD type 1 subfamily.</text>
</comment>
<dbReference type="EC" id="4.2.1.33" evidence="1"/>
<dbReference type="EMBL" id="AL513382">
    <property type="protein sequence ID" value="CAD01267.1"/>
    <property type="molecule type" value="Genomic_DNA"/>
</dbReference>
<dbReference type="EMBL" id="AE014613">
    <property type="protein sequence ID" value="AAO67846.1"/>
    <property type="molecule type" value="Genomic_DNA"/>
</dbReference>
<dbReference type="RefSeq" id="NP_454722.1">
    <property type="nucleotide sequence ID" value="NC_003198.1"/>
</dbReference>
<dbReference type="RefSeq" id="WP_000818262.1">
    <property type="nucleotide sequence ID" value="NZ_WSUR01000009.1"/>
</dbReference>
<dbReference type="SMR" id="Q8Z9I3"/>
<dbReference type="STRING" id="220341.gene:17584169"/>
<dbReference type="KEGG" id="stt:t0114"/>
<dbReference type="KEGG" id="sty:STY0129"/>
<dbReference type="PATRIC" id="fig|220341.7.peg.130"/>
<dbReference type="eggNOG" id="COG0066">
    <property type="taxonomic scope" value="Bacteria"/>
</dbReference>
<dbReference type="HOGENOM" id="CLU_081378_0_3_6"/>
<dbReference type="OMA" id="FGQHLFH"/>
<dbReference type="UniPathway" id="UPA00048">
    <property type="reaction ID" value="UER00071"/>
</dbReference>
<dbReference type="Proteomes" id="UP000000541">
    <property type="component" value="Chromosome"/>
</dbReference>
<dbReference type="Proteomes" id="UP000002670">
    <property type="component" value="Chromosome"/>
</dbReference>
<dbReference type="GO" id="GO:0009316">
    <property type="term" value="C:3-isopropylmalate dehydratase complex"/>
    <property type="evidence" value="ECO:0007669"/>
    <property type="project" value="InterPro"/>
</dbReference>
<dbReference type="GO" id="GO:0003861">
    <property type="term" value="F:3-isopropylmalate dehydratase activity"/>
    <property type="evidence" value="ECO:0007669"/>
    <property type="project" value="UniProtKB-UniRule"/>
</dbReference>
<dbReference type="GO" id="GO:0009098">
    <property type="term" value="P:L-leucine biosynthetic process"/>
    <property type="evidence" value="ECO:0007669"/>
    <property type="project" value="UniProtKB-UniRule"/>
</dbReference>
<dbReference type="CDD" id="cd01577">
    <property type="entry name" value="IPMI_Swivel"/>
    <property type="match status" value="1"/>
</dbReference>
<dbReference type="FunFam" id="3.20.19.10:FF:000003">
    <property type="entry name" value="3-isopropylmalate dehydratase small subunit"/>
    <property type="match status" value="1"/>
</dbReference>
<dbReference type="Gene3D" id="3.20.19.10">
    <property type="entry name" value="Aconitase, domain 4"/>
    <property type="match status" value="1"/>
</dbReference>
<dbReference type="HAMAP" id="MF_01031">
    <property type="entry name" value="LeuD_type1"/>
    <property type="match status" value="1"/>
</dbReference>
<dbReference type="InterPro" id="IPR004431">
    <property type="entry name" value="3-IsopropMal_deHydase_ssu"/>
</dbReference>
<dbReference type="InterPro" id="IPR015928">
    <property type="entry name" value="Aconitase/3IPM_dehydase_swvl"/>
</dbReference>
<dbReference type="InterPro" id="IPR000573">
    <property type="entry name" value="AconitaseA/IPMdHydase_ssu_swvl"/>
</dbReference>
<dbReference type="InterPro" id="IPR033940">
    <property type="entry name" value="IPMI_Swivel"/>
</dbReference>
<dbReference type="InterPro" id="IPR050075">
    <property type="entry name" value="LeuD"/>
</dbReference>
<dbReference type="NCBIfam" id="TIGR00171">
    <property type="entry name" value="leuD"/>
    <property type="match status" value="1"/>
</dbReference>
<dbReference type="NCBIfam" id="NF002458">
    <property type="entry name" value="PRK01641.1"/>
    <property type="match status" value="1"/>
</dbReference>
<dbReference type="PANTHER" id="PTHR43345:SF5">
    <property type="entry name" value="3-ISOPROPYLMALATE DEHYDRATASE SMALL SUBUNIT"/>
    <property type="match status" value="1"/>
</dbReference>
<dbReference type="PANTHER" id="PTHR43345">
    <property type="entry name" value="3-ISOPROPYLMALATE DEHYDRATASE SMALL SUBUNIT 2-RELATED-RELATED"/>
    <property type="match status" value="1"/>
</dbReference>
<dbReference type="Pfam" id="PF00694">
    <property type="entry name" value="Aconitase_C"/>
    <property type="match status" value="1"/>
</dbReference>
<dbReference type="SUPFAM" id="SSF52016">
    <property type="entry name" value="LeuD/IlvD-like"/>
    <property type="match status" value="1"/>
</dbReference>
<evidence type="ECO:0000255" key="1">
    <source>
        <dbReference type="HAMAP-Rule" id="MF_01031"/>
    </source>
</evidence>